<feature type="chain" id="PRO_0000128865" description="4-hydroxy-3-methylbut-2-enyl diphosphate reductase 1">
    <location>
        <begin position="1"/>
        <end position="306"/>
    </location>
</feature>
<feature type="active site" description="Proton donor" evidence="1">
    <location>
        <position position="124"/>
    </location>
</feature>
<feature type="binding site" evidence="1">
    <location>
        <position position="10"/>
    </location>
    <ligand>
        <name>[4Fe-4S] cluster</name>
        <dbReference type="ChEBI" id="CHEBI:49883"/>
    </ligand>
</feature>
<feature type="binding site" evidence="1">
    <location>
        <position position="39"/>
    </location>
    <ligand>
        <name>(2E)-4-hydroxy-3-methylbut-2-enyl diphosphate</name>
        <dbReference type="ChEBI" id="CHEBI:128753"/>
    </ligand>
</feature>
<feature type="binding site" evidence="1">
    <location>
        <position position="39"/>
    </location>
    <ligand>
        <name>dimethylallyl diphosphate</name>
        <dbReference type="ChEBI" id="CHEBI:57623"/>
    </ligand>
</feature>
<feature type="binding site" evidence="1">
    <location>
        <position position="39"/>
    </location>
    <ligand>
        <name>isopentenyl diphosphate</name>
        <dbReference type="ChEBI" id="CHEBI:128769"/>
    </ligand>
</feature>
<feature type="binding site" evidence="1">
    <location>
        <position position="72"/>
    </location>
    <ligand>
        <name>(2E)-4-hydroxy-3-methylbut-2-enyl diphosphate</name>
        <dbReference type="ChEBI" id="CHEBI:128753"/>
    </ligand>
</feature>
<feature type="binding site" evidence="1">
    <location>
        <position position="72"/>
    </location>
    <ligand>
        <name>dimethylallyl diphosphate</name>
        <dbReference type="ChEBI" id="CHEBI:57623"/>
    </ligand>
</feature>
<feature type="binding site" evidence="1">
    <location>
        <position position="72"/>
    </location>
    <ligand>
        <name>isopentenyl diphosphate</name>
        <dbReference type="ChEBI" id="CHEBI:128769"/>
    </ligand>
</feature>
<feature type="binding site" evidence="1">
    <location>
        <position position="94"/>
    </location>
    <ligand>
        <name>[4Fe-4S] cluster</name>
        <dbReference type="ChEBI" id="CHEBI:49883"/>
    </ligand>
</feature>
<feature type="binding site" evidence="1">
    <location>
        <position position="122"/>
    </location>
    <ligand>
        <name>(2E)-4-hydroxy-3-methylbut-2-enyl diphosphate</name>
        <dbReference type="ChEBI" id="CHEBI:128753"/>
    </ligand>
</feature>
<feature type="binding site" evidence="1">
    <location>
        <position position="122"/>
    </location>
    <ligand>
        <name>dimethylallyl diphosphate</name>
        <dbReference type="ChEBI" id="CHEBI:57623"/>
    </ligand>
</feature>
<feature type="binding site" evidence="1">
    <location>
        <position position="122"/>
    </location>
    <ligand>
        <name>isopentenyl diphosphate</name>
        <dbReference type="ChEBI" id="CHEBI:128769"/>
    </ligand>
</feature>
<feature type="binding site" evidence="1">
    <location>
        <position position="162"/>
    </location>
    <ligand>
        <name>(2E)-4-hydroxy-3-methylbut-2-enyl diphosphate</name>
        <dbReference type="ChEBI" id="CHEBI:128753"/>
    </ligand>
</feature>
<feature type="binding site" evidence="1">
    <location>
        <position position="192"/>
    </location>
    <ligand>
        <name>[4Fe-4S] cluster</name>
        <dbReference type="ChEBI" id="CHEBI:49883"/>
    </ligand>
</feature>
<feature type="binding site" evidence="1">
    <location>
        <position position="220"/>
    </location>
    <ligand>
        <name>(2E)-4-hydroxy-3-methylbut-2-enyl diphosphate</name>
        <dbReference type="ChEBI" id="CHEBI:128753"/>
    </ligand>
</feature>
<feature type="binding site" evidence="1">
    <location>
        <position position="220"/>
    </location>
    <ligand>
        <name>dimethylallyl diphosphate</name>
        <dbReference type="ChEBI" id="CHEBI:57623"/>
    </ligand>
</feature>
<feature type="binding site" evidence="1">
    <location>
        <position position="220"/>
    </location>
    <ligand>
        <name>isopentenyl diphosphate</name>
        <dbReference type="ChEBI" id="CHEBI:128769"/>
    </ligand>
</feature>
<feature type="binding site" evidence="1">
    <location>
        <position position="221"/>
    </location>
    <ligand>
        <name>(2E)-4-hydroxy-3-methylbut-2-enyl diphosphate</name>
        <dbReference type="ChEBI" id="CHEBI:128753"/>
    </ligand>
</feature>
<feature type="binding site" evidence="1">
    <location>
        <position position="221"/>
    </location>
    <ligand>
        <name>dimethylallyl diphosphate</name>
        <dbReference type="ChEBI" id="CHEBI:57623"/>
    </ligand>
</feature>
<feature type="binding site" evidence="1">
    <location>
        <position position="221"/>
    </location>
    <ligand>
        <name>isopentenyl diphosphate</name>
        <dbReference type="ChEBI" id="CHEBI:128769"/>
    </ligand>
</feature>
<feature type="binding site" evidence="1">
    <location>
        <position position="222"/>
    </location>
    <ligand>
        <name>(2E)-4-hydroxy-3-methylbut-2-enyl diphosphate</name>
        <dbReference type="ChEBI" id="CHEBI:128753"/>
    </ligand>
</feature>
<feature type="binding site" evidence="1">
    <location>
        <position position="222"/>
    </location>
    <ligand>
        <name>dimethylallyl diphosphate</name>
        <dbReference type="ChEBI" id="CHEBI:57623"/>
    </ligand>
</feature>
<feature type="binding site" evidence="1">
    <location>
        <position position="222"/>
    </location>
    <ligand>
        <name>isopentenyl diphosphate</name>
        <dbReference type="ChEBI" id="CHEBI:128769"/>
    </ligand>
</feature>
<feature type="binding site" evidence="1">
    <location>
        <position position="264"/>
    </location>
    <ligand>
        <name>(2E)-4-hydroxy-3-methylbut-2-enyl diphosphate</name>
        <dbReference type="ChEBI" id="CHEBI:128753"/>
    </ligand>
</feature>
<feature type="binding site" evidence="1">
    <location>
        <position position="264"/>
    </location>
    <ligand>
        <name>dimethylallyl diphosphate</name>
        <dbReference type="ChEBI" id="CHEBI:57623"/>
    </ligand>
</feature>
<feature type="binding site" evidence="1">
    <location>
        <position position="264"/>
    </location>
    <ligand>
        <name>isopentenyl diphosphate</name>
        <dbReference type="ChEBI" id="CHEBI:128769"/>
    </ligand>
</feature>
<accession>Q6N3G0</accession>
<reference key="1">
    <citation type="journal article" date="2004" name="Nat. Biotechnol.">
        <title>Complete genome sequence of the metabolically versatile photosynthetic bacterium Rhodopseudomonas palustris.</title>
        <authorList>
            <person name="Larimer F.W."/>
            <person name="Chain P."/>
            <person name="Hauser L."/>
            <person name="Lamerdin J.E."/>
            <person name="Malfatti S."/>
            <person name="Do L."/>
            <person name="Land M.L."/>
            <person name="Pelletier D.A."/>
            <person name="Beatty J.T."/>
            <person name="Lang A.S."/>
            <person name="Tabita F.R."/>
            <person name="Gibson J.L."/>
            <person name="Hanson T.E."/>
            <person name="Bobst C."/>
            <person name="Torres y Torres J.L."/>
            <person name="Peres C."/>
            <person name="Harrison F.H."/>
            <person name="Gibson J."/>
            <person name="Harwood C.S."/>
        </authorList>
    </citation>
    <scope>NUCLEOTIDE SEQUENCE [LARGE SCALE GENOMIC DNA]</scope>
    <source>
        <strain>ATCC BAA-98 / CGA009</strain>
    </source>
</reference>
<comment type="function">
    <text evidence="1">Catalyzes the conversion of 1-hydroxy-2-methyl-2-(E)-butenyl 4-diphosphate (HMBPP) into a mixture of isopentenyl diphosphate (IPP) and dimethylallyl diphosphate (DMAPP). Acts in the terminal step of the DOXP/MEP pathway for isoprenoid precursor biosynthesis.</text>
</comment>
<comment type="catalytic activity">
    <reaction evidence="1">
        <text>isopentenyl diphosphate + 2 oxidized [2Fe-2S]-[ferredoxin] + H2O = (2E)-4-hydroxy-3-methylbut-2-enyl diphosphate + 2 reduced [2Fe-2S]-[ferredoxin] + 2 H(+)</text>
        <dbReference type="Rhea" id="RHEA:24488"/>
        <dbReference type="Rhea" id="RHEA-COMP:10000"/>
        <dbReference type="Rhea" id="RHEA-COMP:10001"/>
        <dbReference type="ChEBI" id="CHEBI:15377"/>
        <dbReference type="ChEBI" id="CHEBI:15378"/>
        <dbReference type="ChEBI" id="CHEBI:33737"/>
        <dbReference type="ChEBI" id="CHEBI:33738"/>
        <dbReference type="ChEBI" id="CHEBI:128753"/>
        <dbReference type="ChEBI" id="CHEBI:128769"/>
        <dbReference type="EC" id="1.17.7.4"/>
    </reaction>
</comment>
<comment type="catalytic activity">
    <reaction evidence="1">
        <text>dimethylallyl diphosphate + 2 oxidized [2Fe-2S]-[ferredoxin] + H2O = (2E)-4-hydroxy-3-methylbut-2-enyl diphosphate + 2 reduced [2Fe-2S]-[ferredoxin] + 2 H(+)</text>
        <dbReference type="Rhea" id="RHEA:24825"/>
        <dbReference type="Rhea" id="RHEA-COMP:10000"/>
        <dbReference type="Rhea" id="RHEA-COMP:10001"/>
        <dbReference type="ChEBI" id="CHEBI:15377"/>
        <dbReference type="ChEBI" id="CHEBI:15378"/>
        <dbReference type="ChEBI" id="CHEBI:33737"/>
        <dbReference type="ChEBI" id="CHEBI:33738"/>
        <dbReference type="ChEBI" id="CHEBI:57623"/>
        <dbReference type="ChEBI" id="CHEBI:128753"/>
        <dbReference type="EC" id="1.17.7.4"/>
    </reaction>
</comment>
<comment type="cofactor">
    <cofactor evidence="1">
        <name>[4Fe-4S] cluster</name>
        <dbReference type="ChEBI" id="CHEBI:49883"/>
    </cofactor>
    <text evidence="1">Binds 1 [4Fe-4S] cluster per subunit.</text>
</comment>
<comment type="pathway">
    <text evidence="1">Isoprenoid biosynthesis; dimethylallyl diphosphate biosynthesis; dimethylallyl diphosphate from (2E)-4-hydroxy-3-methylbutenyl diphosphate: step 1/1.</text>
</comment>
<comment type="pathway">
    <text evidence="1">Isoprenoid biosynthesis; isopentenyl diphosphate biosynthesis via DXP pathway; isopentenyl diphosphate from 1-deoxy-D-xylulose 5-phosphate: step 6/6.</text>
</comment>
<comment type="similarity">
    <text evidence="1">Belongs to the IspH family.</text>
</comment>
<protein>
    <recommendedName>
        <fullName evidence="1">4-hydroxy-3-methylbut-2-enyl diphosphate reductase 1</fullName>
        <shortName evidence="1">HMBPP reductase 1</shortName>
        <ecNumber evidence="1">1.17.7.4</ecNumber>
    </recommendedName>
</protein>
<name>ISPH1_RHOPA</name>
<evidence type="ECO:0000255" key="1">
    <source>
        <dbReference type="HAMAP-Rule" id="MF_00191"/>
    </source>
</evidence>
<proteinExistence type="inferred from homology"/>
<gene>
    <name evidence="1" type="primary">ispH1</name>
    <name type="synonym">lytB1</name>
    <name type="ordered locus">RPA3734</name>
</gene>
<keyword id="KW-0004">4Fe-4S</keyword>
<keyword id="KW-0408">Iron</keyword>
<keyword id="KW-0411">Iron-sulfur</keyword>
<keyword id="KW-0414">Isoprene biosynthesis</keyword>
<keyword id="KW-0479">Metal-binding</keyword>
<keyword id="KW-0560">Oxidoreductase</keyword>
<sequence>MFLAQPRGFCAGVVRAIEIVERALEKYGPPVYVRHEIVHNKYVVESLKAKGAIFVEELSEVPPKAVTVFSAHGVARSIEEEAAARDLPVLNATCPLVTKVHNQGKRYTSKGRTLILIGHAGHPEVEGTMGQVPGPVLLVQNLDDVAALTLPPETPVAYITQTTLSVDDTKDIIVALSKKFHDIEGPDTRDICYATQNRQSAVRQMSKLVDLILVVGANNSSNSNRLREIGTEAGIPSYLIADGSELDPAWLDGKKAVGITAGASAPEVLVDDVIEALRRIVPVTVSVLPGREENIEFVLPAELATA</sequence>
<dbReference type="EC" id="1.17.7.4" evidence="1"/>
<dbReference type="EMBL" id="BX572605">
    <property type="protein sequence ID" value="CAE29175.1"/>
    <property type="molecule type" value="Genomic_DNA"/>
</dbReference>
<dbReference type="SMR" id="Q6N3G0"/>
<dbReference type="STRING" id="258594.RPA3734"/>
<dbReference type="eggNOG" id="COG0761">
    <property type="taxonomic scope" value="Bacteria"/>
</dbReference>
<dbReference type="HOGENOM" id="CLU_027486_1_0_5"/>
<dbReference type="PhylomeDB" id="Q6N3G0"/>
<dbReference type="UniPathway" id="UPA00056">
    <property type="reaction ID" value="UER00097"/>
</dbReference>
<dbReference type="UniPathway" id="UPA00059">
    <property type="reaction ID" value="UER00105"/>
</dbReference>
<dbReference type="GO" id="GO:0051539">
    <property type="term" value="F:4 iron, 4 sulfur cluster binding"/>
    <property type="evidence" value="ECO:0007669"/>
    <property type="project" value="UniProtKB-UniRule"/>
</dbReference>
<dbReference type="GO" id="GO:0051745">
    <property type="term" value="F:4-hydroxy-3-methylbut-2-enyl diphosphate reductase activity"/>
    <property type="evidence" value="ECO:0007669"/>
    <property type="project" value="UniProtKB-UniRule"/>
</dbReference>
<dbReference type="GO" id="GO:0046872">
    <property type="term" value="F:metal ion binding"/>
    <property type="evidence" value="ECO:0007669"/>
    <property type="project" value="UniProtKB-KW"/>
</dbReference>
<dbReference type="GO" id="GO:0050992">
    <property type="term" value="P:dimethylallyl diphosphate biosynthetic process"/>
    <property type="evidence" value="ECO:0007669"/>
    <property type="project" value="UniProtKB-UniRule"/>
</dbReference>
<dbReference type="GO" id="GO:0019288">
    <property type="term" value="P:isopentenyl diphosphate biosynthetic process, methylerythritol 4-phosphate pathway"/>
    <property type="evidence" value="ECO:0007669"/>
    <property type="project" value="UniProtKB-UniRule"/>
</dbReference>
<dbReference type="GO" id="GO:0016114">
    <property type="term" value="P:terpenoid biosynthetic process"/>
    <property type="evidence" value="ECO:0007669"/>
    <property type="project" value="UniProtKB-UniRule"/>
</dbReference>
<dbReference type="CDD" id="cd13944">
    <property type="entry name" value="lytB_ispH"/>
    <property type="match status" value="1"/>
</dbReference>
<dbReference type="Gene3D" id="3.40.50.11270">
    <property type="match status" value="1"/>
</dbReference>
<dbReference type="Gene3D" id="3.40.1010.20">
    <property type="entry name" value="4-hydroxy-3-methylbut-2-enyl diphosphate reductase, catalytic domain"/>
    <property type="match status" value="2"/>
</dbReference>
<dbReference type="HAMAP" id="MF_00191">
    <property type="entry name" value="IspH"/>
    <property type="match status" value="1"/>
</dbReference>
<dbReference type="InterPro" id="IPR003451">
    <property type="entry name" value="LytB/IspH"/>
</dbReference>
<dbReference type="NCBIfam" id="TIGR00216">
    <property type="entry name" value="ispH_lytB"/>
    <property type="match status" value="1"/>
</dbReference>
<dbReference type="NCBIfam" id="NF002188">
    <property type="entry name" value="PRK01045.1-2"/>
    <property type="match status" value="1"/>
</dbReference>
<dbReference type="NCBIfam" id="NF002190">
    <property type="entry name" value="PRK01045.1-4"/>
    <property type="match status" value="1"/>
</dbReference>
<dbReference type="PANTHER" id="PTHR30426">
    <property type="entry name" value="4-HYDROXY-3-METHYLBUT-2-ENYL DIPHOSPHATE REDUCTASE"/>
    <property type="match status" value="1"/>
</dbReference>
<dbReference type="PANTHER" id="PTHR30426:SF0">
    <property type="entry name" value="4-HYDROXY-3-METHYLBUT-2-ENYL DIPHOSPHATE REDUCTASE"/>
    <property type="match status" value="1"/>
</dbReference>
<dbReference type="Pfam" id="PF02401">
    <property type="entry name" value="LYTB"/>
    <property type="match status" value="1"/>
</dbReference>
<organism>
    <name type="scientific">Rhodopseudomonas palustris (strain ATCC BAA-98 / CGA009)</name>
    <dbReference type="NCBI Taxonomy" id="258594"/>
    <lineage>
        <taxon>Bacteria</taxon>
        <taxon>Pseudomonadati</taxon>
        <taxon>Pseudomonadota</taxon>
        <taxon>Alphaproteobacteria</taxon>
        <taxon>Hyphomicrobiales</taxon>
        <taxon>Nitrobacteraceae</taxon>
        <taxon>Rhodopseudomonas</taxon>
    </lineage>
</organism>